<sequence length="279" mass="30481">MTRPLSYFHLHLISDATGETLLAAGRAAAAQYANARAIEHIYPLIRTEKQLRKVLEGIDAEPGIVLYTVVDQKLAAIIDESCADMGVPSVSVLEPVLNTFQSYLGAPAHRRASAQHVLNADYFRRIDALNFMMEHDDGQLPLDIEEADVIIVGISRTSKTPTSIYLANRGIKAANVPLVLGIPVPEILFAAKRPLIVGLVATAERISQIRQNRPLGNIPSLDTGLYTDRVSISEELAYARNLCNRHGWPIIDVSRRSIEETAAAILALLRNGKKEGSSS</sequence>
<reference key="1">
    <citation type="journal article" date="2005" name="J. Bacteriol.">
        <title>Completion of the genome sequence of Brucella abortus and comparison to the highly similar genomes of Brucella melitensis and Brucella suis.</title>
        <authorList>
            <person name="Halling S.M."/>
            <person name="Peterson-Burch B.D."/>
            <person name="Bricker B.J."/>
            <person name="Zuerner R.L."/>
            <person name="Qing Z."/>
            <person name="Li L.-L."/>
            <person name="Kapur V."/>
            <person name="Alt D.P."/>
            <person name="Olsen S.C."/>
        </authorList>
    </citation>
    <scope>NUCLEOTIDE SEQUENCE [LARGE SCALE GENOMIC DNA]</scope>
    <source>
        <strain>9-941</strain>
    </source>
</reference>
<gene>
    <name type="ordered locus">BruAb1_2042</name>
</gene>
<organism>
    <name type="scientific">Brucella abortus biovar 1 (strain 9-941)</name>
    <dbReference type="NCBI Taxonomy" id="262698"/>
    <lineage>
        <taxon>Bacteria</taxon>
        <taxon>Pseudomonadati</taxon>
        <taxon>Pseudomonadota</taxon>
        <taxon>Alphaproteobacteria</taxon>
        <taxon>Hyphomicrobiales</taxon>
        <taxon>Brucellaceae</taxon>
        <taxon>Brucella/Ochrobactrum group</taxon>
        <taxon>Brucella</taxon>
    </lineage>
</organism>
<comment type="function">
    <text evidence="1">Bifunctional serine/threonine kinase and phosphorylase involved in the regulation of the pyruvate, phosphate dikinase (PPDK) by catalyzing its phosphorylation/dephosphorylation.</text>
</comment>
<comment type="catalytic activity">
    <reaction evidence="1">
        <text>N(tele)-phospho-L-histidyl/L-threonyl-[pyruvate, phosphate dikinase] + ADP = N(tele)-phospho-L-histidyl/O-phospho-L-threonyl-[pyruvate, phosphate dikinase] + AMP + H(+)</text>
        <dbReference type="Rhea" id="RHEA:43692"/>
        <dbReference type="Rhea" id="RHEA-COMP:10650"/>
        <dbReference type="Rhea" id="RHEA-COMP:10651"/>
        <dbReference type="ChEBI" id="CHEBI:15378"/>
        <dbReference type="ChEBI" id="CHEBI:30013"/>
        <dbReference type="ChEBI" id="CHEBI:61977"/>
        <dbReference type="ChEBI" id="CHEBI:83586"/>
        <dbReference type="ChEBI" id="CHEBI:456215"/>
        <dbReference type="ChEBI" id="CHEBI:456216"/>
        <dbReference type="EC" id="2.7.11.32"/>
    </reaction>
</comment>
<comment type="catalytic activity">
    <reaction evidence="1">
        <text>N(tele)-phospho-L-histidyl/O-phospho-L-threonyl-[pyruvate, phosphate dikinase] + phosphate + H(+) = N(tele)-phospho-L-histidyl/L-threonyl-[pyruvate, phosphate dikinase] + diphosphate</text>
        <dbReference type="Rhea" id="RHEA:43696"/>
        <dbReference type="Rhea" id="RHEA-COMP:10650"/>
        <dbReference type="Rhea" id="RHEA-COMP:10651"/>
        <dbReference type="ChEBI" id="CHEBI:15378"/>
        <dbReference type="ChEBI" id="CHEBI:30013"/>
        <dbReference type="ChEBI" id="CHEBI:33019"/>
        <dbReference type="ChEBI" id="CHEBI:43474"/>
        <dbReference type="ChEBI" id="CHEBI:61977"/>
        <dbReference type="ChEBI" id="CHEBI:83586"/>
        <dbReference type="EC" id="2.7.4.27"/>
    </reaction>
</comment>
<comment type="similarity">
    <text evidence="1">Belongs to the pyruvate, phosphate/water dikinase regulatory protein family. PDRP subfamily.</text>
</comment>
<accession>Q57AJ1</accession>
<protein>
    <recommendedName>
        <fullName evidence="1">Putative pyruvate, phosphate dikinase regulatory protein</fullName>
        <shortName evidence="1">PPDK regulatory protein</shortName>
        <ecNumber evidence="1">2.7.11.32</ecNumber>
        <ecNumber evidence="1">2.7.4.27</ecNumber>
    </recommendedName>
</protein>
<evidence type="ECO:0000255" key="1">
    <source>
        <dbReference type="HAMAP-Rule" id="MF_00921"/>
    </source>
</evidence>
<dbReference type="EC" id="2.7.11.32" evidence="1"/>
<dbReference type="EC" id="2.7.4.27" evidence="1"/>
<dbReference type="EMBL" id="AE017223">
    <property type="protein sequence ID" value="AAX75343.1"/>
    <property type="molecule type" value="Genomic_DNA"/>
</dbReference>
<dbReference type="RefSeq" id="WP_002965131.1">
    <property type="nucleotide sequence ID" value="NC_006932.1"/>
</dbReference>
<dbReference type="SMR" id="Q57AJ1"/>
<dbReference type="EnsemblBacteria" id="AAX75343">
    <property type="protein sequence ID" value="AAX75343"/>
    <property type="gene ID" value="BruAb1_2042"/>
</dbReference>
<dbReference type="KEGG" id="bmb:BruAb1_2042"/>
<dbReference type="HOGENOM" id="CLU_046206_2_0_5"/>
<dbReference type="Proteomes" id="UP000000540">
    <property type="component" value="Chromosome I"/>
</dbReference>
<dbReference type="GO" id="GO:0043531">
    <property type="term" value="F:ADP binding"/>
    <property type="evidence" value="ECO:0007669"/>
    <property type="project" value="UniProtKB-UniRule"/>
</dbReference>
<dbReference type="GO" id="GO:0005524">
    <property type="term" value="F:ATP binding"/>
    <property type="evidence" value="ECO:0007669"/>
    <property type="project" value="InterPro"/>
</dbReference>
<dbReference type="GO" id="GO:0016776">
    <property type="term" value="F:phosphotransferase activity, phosphate group as acceptor"/>
    <property type="evidence" value="ECO:0007669"/>
    <property type="project" value="UniProtKB-UniRule"/>
</dbReference>
<dbReference type="GO" id="GO:0004674">
    <property type="term" value="F:protein serine/threonine kinase activity"/>
    <property type="evidence" value="ECO:0007669"/>
    <property type="project" value="UniProtKB-UniRule"/>
</dbReference>
<dbReference type="HAMAP" id="MF_00921">
    <property type="entry name" value="PDRP"/>
    <property type="match status" value="1"/>
</dbReference>
<dbReference type="InterPro" id="IPR005177">
    <property type="entry name" value="Kinase-pyrophosphorylase"/>
</dbReference>
<dbReference type="InterPro" id="IPR026565">
    <property type="entry name" value="PPDK_reg"/>
</dbReference>
<dbReference type="NCBIfam" id="NF003742">
    <property type="entry name" value="PRK05339.1"/>
    <property type="match status" value="1"/>
</dbReference>
<dbReference type="PANTHER" id="PTHR31756">
    <property type="entry name" value="PYRUVATE, PHOSPHATE DIKINASE REGULATORY PROTEIN 1, CHLOROPLASTIC"/>
    <property type="match status" value="1"/>
</dbReference>
<dbReference type="PANTHER" id="PTHR31756:SF3">
    <property type="entry name" value="PYRUVATE, PHOSPHATE DIKINASE REGULATORY PROTEIN 1, CHLOROPLASTIC"/>
    <property type="match status" value="1"/>
</dbReference>
<dbReference type="Pfam" id="PF03618">
    <property type="entry name" value="Kinase-PPPase"/>
    <property type="match status" value="1"/>
</dbReference>
<proteinExistence type="inferred from homology"/>
<name>PDRP_BRUAB</name>
<feature type="chain" id="PRO_0000316641" description="Putative pyruvate, phosphate dikinase regulatory protein">
    <location>
        <begin position="1"/>
        <end position="279"/>
    </location>
</feature>
<feature type="binding site" evidence="1">
    <location>
        <begin position="153"/>
        <end position="160"/>
    </location>
    <ligand>
        <name>ADP</name>
        <dbReference type="ChEBI" id="CHEBI:456216"/>
    </ligand>
</feature>
<keyword id="KW-0418">Kinase</keyword>
<keyword id="KW-0547">Nucleotide-binding</keyword>
<keyword id="KW-0723">Serine/threonine-protein kinase</keyword>
<keyword id="KW-0808">Transferase</keyword>